<comment type="function">
    <text>Required for genome encapsidation. Forms ribonucleoprotein complexes along with TGB1 helicase and viral RNA.</text>
</comment>
<comment type="subcellular location">
    <subcellularLocation>
        <location evidence="2">Virion</location>
    </subcellularLocation>
</comment>
<comment type="similarity">
    <text evidence="2">Belongs to the potexvirus capsid protein family.</text>
</comment>
<protein>
    <recommendedName>
        <fullName>Coat protein</fullName>
    </recommendedName>
    <alternativeName>
        <fullName>Capsid protein</fullName>
        <shortName>CP</shortName>
    </alternativeName>
</protein>
<feature type="chain" id="PRO_0000222624" description="Coat protein">
    <location>
        <begin position="1"/>
        <end position="249"/>
    </location>
</feature>
<feature type="region of interest" description="Disordered" evidence="1">
    <location>
        <begin position="1"/>
        <end position="28"/>
    </location>
</feature>
<evidence type="ECO:0000256" key="1">
    <source>
        <dbReference type="SAM" id="MobiDB-lite"/>
    </source>
</evidence>
<evidence type="ECO:0000305" key="2"/>
<organismHost>
    <name type="scientific">Solanum tuberosum</name>
    <name type="common">Potato</name>
    <dbReference type="NCBI Taxonomy" id="4113"/>
</organismHost>
<dbReference type="PIR" id="S03789">
    <property type="entry name" value="S03789"/>
</dbReference>
<dbReference type="SMR" id="P37993"/>
<dbReference type="GO" id="GO:0019029">
    <property type="term" value="C:helical viral capsid"/>
    <property type="evidence" value="ECO:0007669"/>
    <property type="project" value="UniProtKB-KW"/>
</dbReference>
<dbReference type="GO" id="GO:1990904">
    <property type="term" value="C:ribonucleoprotein complex"/>
    <property type="evidence" value="ECO:0007669"/>
    <property type="project" value="UniProtKB-KW"/>
</dbReference>
<dbReference type="GO" id="GO:0005198">
    <property type="term" value="F:structural molecule activity"/>
    <property type="evidence" value="ECO:0007669"/>
    <property type="project" value="InterPro"/>
</dbReference>
<dbReference type="InterPro" id="IPR000052">
    <property type="entry name" value="Pltvir_coat"/>
</dbReference>
<dbReference type="Pfam" id="PF00286">
    <property type="entry name" value="Flexi_CP"/>
    <property type="match status" value="1"/>
</dbReference>
<dbReference type="PRINTS" id="PR00232">
    <property type="entry name" value="POTXCARLCOAT"/>
</dbReference>
<dbReference type="PROSITE" id="PS00418">
    <property type="entry name" value="POTEX_CARLAVIRUS_COAT"/>
    <property type="match status" value="1"/>
</dbReference>
<organism>
    <name type="scientific">Potato aucuba mosaic virus</name>
    <name type="common">PAMV</name>
    <dbReference type="NCBI Taxonomy" id="12182"/>
    <lineage>
        <taxon>Viruses</taxon>
        <taxon>Riboviria</taxon>
        <taxon>Orthornavirae</taxon>
        <taxon>Kitrinoviricota</taxon>
        <taxon>Alsuviricetes</taxon>
        <taxon>Tymovirales</taxon>
        <taxon>Alphaflexiviridae</taxon>
        <taxon>Potexvirus</taxon>
    </lineage>
</organism>
<proteinExistence type="inferred from homology"/>
<reference key="1">
    <citation type="journal article" date="1986" name="Dokl. Akad. Nauk SSSR">
        <title>Comparative study of genomes of potexviruses. Homology of primary structure of PAMV and PXV envelope protein genes.</title>
        <authorList>
            <person name="Bundin V.S."/>
            <person name="Vishnyakova O.A."/>
            <person name="Zakhariev V.M."/>
            <person name="Morozov S.Y."/>
            <person name="Atabekov I.G."/>
            <person name="Skryabin K.G."/>
        </authorList>
    </citation>
    <scope>NUCLEOTIDE SEQUENCE</scope>
</reference>
<reference key="2">
    <citation type="journal article" date="2005" name="Mol. Plant Microbe Interact.">
        <title>A new cell-to-cell transport model for Potexviruses.</title>
        <authorList>
            <person name="Verchot-Lubicz J."/>
        </authorList>
    </citation>
    <scope>REVIEW</scope>
</reference>
<keyword id="KW-0167">Capsid protein</keyword>
<keyword id="KW-1139">Helical capsid protein</keyword>
<keyword id="KW-0687">Ribonucleoprotein</keyword>
<keyword id="KW-0946">Virion</keyword>
<sequence length="249" mass="27128">MVDSKKTETPQVVDASKKAENSKTSQAGRIQFLSAPKQFSASDVRSSPSLADLDEIAYEVRTTSIASPAEIEAVCQLWIRNTEIPADKVALIAIDMARAYADVGASRKAVLLDAPTLAPTVARSRLAQLKAGAGISPRQFCSYYAKIVWNLMLHKNEPPANWAKIGFKEDYKFAAFDFFDAVDSPAALEPSQWVRHPTDKERAAHGVVKWASLSRERLQEGTSITTVAELNKGHLGGYNNLPALMAPPS</sequence>
<accession>P37993</accession>
<name>CAPSD_PAMV</name>